<sequence>MVTIRLARHGAKKRPFYQIVVADSRNVATGRFIEKVGFFNPTAQGQEEGLRIDLDRVNHWVGQGASLSDRVAKLVKDAQKAA</sequence>
<reference key="1">
    <citation type="journal article" date="2003" name="Genome Res.">
        <title>Comparative genome analysis of Vibrio vulnificus, a marine pathogen.</title>
        <authorList>
            <person name="Chen C.-Y."/>
            <person name="Wu K.-M."/>
            <person name="Chang Y.-C."/>
            <person name="Chang C.-H."/>
            <person name="Tsai H.-C."/>
            <person name="Liao T.-L."/>
            <person name="Liu Y.-M."/>
            <person name="Chen H.-J."/>
            <person name="Shen A.B.-T."/>
            <person name="Li J.-C."/>
            <person name="Su T.-L."/>
            <person name="Shao C.-P."/>
            <person name="Lee C.-T."/>
            <person name="Hor L.-I."/>
            <person name="Tsai S.-F."/>
        </authorList>
    </citation>
    <scope>NUCLEOTIDE SEQUENCE [LARGE SCALE GENOMIC DNA]</scope>
    <source>
        <strain>YJ016</strain>
    </source>
</reference>
<protein>
    <recommendedName>
        <fullName evidence="1">Small ribosomal subunit protein bS16</fullName>
    </recommendedName>
    <alternativeName>
        <fullName evidence="2">30S ribosomal protein S16</fullName>
    </alternativeName>
</protein>
<comment type="similarity">
    <text evidence="1">Belongs to the bacterial ribosomal protein bS16 family.</text>
</comment>
<keyword id="KW-0687">Ribonucleoprotein</keyword>
<keyword id="KW-0689">Ribosomal protein</keyword>
<dbReference type="EMBL" id="BA000037">
    <property type="protein sequence ID" value="BAC95552.1"/>
    <property type="molecule type" value="Genomic_DNA"/>
</dbReference>
<dbReference type="RefSeq" id="WP_011079541.1">
    <property type="nucleotide sequence ID" value="NC_005139.1"/>
</dbReference>
<dbReference type="SMR" id="Q7MHT1"/>
<dbReference type="STRING" id="672.VV93_v1c24990"/>
<dbReference type="GeneID" id="95678062"/>
<dbReference type="KEGG" id="vvy:VV2788"/>
<dbReference type="eggNOG" id="COG0228">
    <property type="taxonomic scope" value="Bacteria"/>
</dbReference>
<dbReference type="HOGENOM" id="CLU_100590_5_1_6"/>
<dbReference type="Proteomes" id="UP000002675">
    <property type="component" value="Chromosome I"/>
</dbReference>
<dbReference type="GO" id="GO:0005737">
    <property type="term" value="C:cytoplasm"/>
    <property type="evidence" value="ECO:0007669"/>
    <property type="project" value="UniProtKB-ARBA"/>
</dbReference>
<dbReference type="GO" id="GO:0015935">
    <property type="term" value="C:small ribosomal subunit"/>
    <property type="evidence" value="ECO:0007669"/>
    <property type="project" value="TreeGrafter"/>
</dbReference>
<dbReference type="GO" id="GO:0003735">
    <property type="term" value="F:structural constituent of ribosome"/>
    <property type="evidence" value="ECO:0007669"/>
    <property type="project" value="InterPro"/>
</dbReference>
<dbReference type="GO" id="GO:0006412">
    <property type="term" value="P:translation"/>
    <property type="evidence" value="ECO:0007669"/>
    <property type="project" value="UniProtKB-UniRule"/>
</dbReference>
<dbReference type="FunFam" id="3.30.1320.10:FF:000001">
    <property type="entry name" value="30S ribosomal protein S16"/>
    <property type="match status" value="1"/>
</dbReference>
<dbReference type="Gene3D" id="3.30.1320.10">
    <property type="match status" value="1"/>
</dbReference>
<dbReference type="HAMAP" id="MF_00385">
    <property type="entry name" value="Ribosomal_bS16"/>
    <property type="match status" value="1"/>
</dbReference>
<dbReference type="InterPro" id="IPR000307">
    <property type="entry name" value="Ribosomal_bS16"/>
</dbReference>
<dbReference type="InterPro" id="IPR020592">
    <property type="entry name" value="Ribosomal_bS16_CS"/>
</dbReference>
<dbReference type="InterPro" id="IPR023803">
    <property type="entry name" value="Ribosomal_bS16_dom_sf"/>
</dbReference>
<dbReference type="NCBIfam" id="TIGR00002">
    <property type="entry name" value="S16"/>
    <property type="match status" value="1"/>
</dbReference>
<dbReference type="PANTHER" id="PTHR12919">
    <property type="entry name" value="30S RIBOSOMAL PROTEIN S16"/>
    <property type="match status" value="1"/>
</dbReference>
<dbReference type="PANTHER" id="PTHR12919:SF20">
    <property type="entry name" value="SMALL RIBOSOMAL SUBUNIT PROTEIN BS16M"/>
    <property type="match status" value="1"/>
</dbReference>
<dbReference type="Pfam" id="PF00886">
    <property type="entry name" value="Ribosomal_S16"/>
    <property type="match status" value="1"/>
</dbReference>
<dbReference type="SUPFAM" id="SSF54565">
    <property type="entry name" value="Ribosomal protein S16"/>
    <property type="match status" value="1"/>
</dbReference>
<dbReference type="PROSITE" id="PS00732">
    <property type="entry name" value="RIBOSOMAL_S16"/>
    <property type="match status" value="1"/>
</dbReference>
<name>RS16_VIBVY</name>
<proteinExistence type="inferred from homology"/>
<evidence type="ECO:0000255" key="1">
    <source>
        <dbReference type="HAMAP-Rule" id="MF_00385"/>
    </source>
</evidence>
<evidence type="ECO:0000305" key="2"/>
<gene>
    <name evidence="1" type="primary">rpsP</name>
    <name type="ordered locus">VV2788</name>
</gene>
<accession>Q7MHT1</accession>
<organism>
    <name type="scientific">Vibrio vulnificus (strain YJ016)</name>
    <dbReference type="NCBI Taxonomy" id="196600"/>
    <lineage>
        <taxon>Bacteria</taxon>
        <taxon>Pseudomonadati</taxon>
        <taxon>Pseudomonadota</taxon>
        <taxon>Gammaproteobacteria</taxon>
        <taxon>Vibrionales</taxon>
        <taxon>Vibrionaceae</taxon>
        <taxon>Vibrio</taxon>
    </lineage>
</organism>
<feature type="chain" id="PRO_0000167281" description="Small ribosomal subunit protein bS16">
    <location>
        <begin position="1"/>
        <end position="82"/>
    </location>
</feature>